<proteinExistence type="evidence at protein level"/>
<keyword id="KW-0002">3D-structure</keyword>
<keyword id="KW-1003">Cell membrane</keyword>
<keyword id="KW-0168">Coated pit</keyword>
<keyword id="KW-0472">Membrane</keyword>
<keyword id="KW-0653">Protein transport</keyword>
<keyword id="KW-1185">Reference proteome</keyword>
<keyword id="KW-0813">Transport</keyword>
<accession>P36000</accession>
<accession>D6VX61</accession>
<sequence>MPPLDKRIKKFLKDSIRIAPKISGKGELSELRTGLVSQYPQTRKDAIKKTIQQMTLGKDVSSLFPDVLKNIATIDVEQKKLVYLYVMNYAETHPELCILAVNTFITDAQDPNPLIRCMAIRTMSMIRVDKILEYIETPLRRTLHDDNAYVRKTAVICVAKLFQLNKDLCVELGVVEDLVNALDDSNPLVIANATAALIEIHNMDMDAVDLSSLIQSHVSQFLLALNECTEWARIIILGTLSEYSAKDSLEAQDIIDRVTAHLQHVNPAVVLATIKVIVRNLPQIEYSSNSLIMKRLSSAFVSLMSTPPEMQYVALKNIRIILEKYPELLTKELRIFYVKFNDPLYVKLEKIDILVRLVDPSNLKQCTLLLTELKEYAMEYEPEFVSRAIQALSQLGIKYAQESFVSKVLDILLELLERQDTIKDDCCISLCDLLRHCPGNDKMAKQVCAVFNTWSNPEVLLQSDIAKCNYVWLLGQHPNNFSDLESKINIFIENFVQEEALTQMSLLMTIVRLHATLTGSMLQSVLELATQQTHELDVRDMAMMYWRCLSMPNNESLVNDLCQNKLPMISNTLEKFSPEVLEKLLMELGTISSIYFKPDSNRRKGKKYVQNIVKGKHIEELESMAKNEISSKANDDVLLDFDERDDVTNTNAGMLNTLTTLGDLDDLFDFGPSEDATQINTNDTKAVQGLKELKLGGDSNGISSGGKNNPDVSGGNIVSQDLLDLF</sequence>
<protein>
    <recommendedName>
        <fullName>AP-1 complex subunit beta-1</fullName>
    </recommendedName>
    <alternativeName>
        <fullName>Beta-1-adaptin</fullName>
    </alternativeName>
    <alternativeName>
        <fullName>Clathrin assembly protein complex 1 beta-1 large chain</fullName>
    </alternativeName>
    <alternativeName>
        <fullName>Clathrin assembly protein large beta-1 chain</fullName>
    </alternativeName>
</protein>
<feature type="chain" id="PRO_0000193753" description="AP-1 complex subunit beta-1">
    <location>
        <begin position="1"/>
        <end position="726"/>
    </location>
</feature>
<evidence type="ECO:0000269" key="1">
    <source>
    </source>
</evidence>
<evidence type="ECO:0000269" key="2">
    <source>
    </source>
</evidence>
<evidence type="ECO:0000305" key="3"/>
<gene>
    <name type="primary">APL2</name>
    <name type="ordered locus">YKL135C</name>
</gene>
<dbReference type="EMBL" id="Z30212">
    <property type="protein sequence ID" value="CAA82931.1"/>
    <property type="molecule type" value="Genomic_DNA"/>
</dbReference>
<dbReference type="EMBL" id="Z28135">
    <property type="protein sequence ID" value="CAA81977.1"/>
    <property type="molecule type" value="Genomic_DNA"/>
</dbReference>
<dbReference type="EMBL" id="BK006944">
    <property type="protein sequence ID" value="DAA09027.1"/>
    <property type="molecule type" value="Genomic_DNA"/>
</dbReference>
<dbReference type="PIR" id="S37964">
    <property type="entry name" value="S37964"/>
</dbReference>
<dbReference type="RefSeq" id="NP_012787.1">
    <property type="nucleotide sequence ID" value="NM_001179701.1"/>
</dbReference>
<dbReference type="PDB" id="9EXT">
    <property type="method" value="X-ray"/>
    <property type="resolution" value="2.75 A"/>
    <property type="chains" value="D/E/F/G/H=719-726"/>
</dbReference>
<dbReference type="PDBsum" id="9EXT"/>
<dbReference type="SMR" id="P36000"/>
<dbReference type="BioGRID" id="34001">
    <property type="interactions" value="146"/>
</dbReference>
<dbReference type="ComplexPortal" id="CPX-532">
    <property type="entry name" value="Adaptor complex AP-1"/>
</dbReference>
<dbReference type="ComplexPortal" id="CPX-533">
    <property type="entry name" value="Adaptor complex AP-1R"/>
</dbReference>
<dbReference type="DIP" id="DIP-1199N"/>
<dbReference type="FunCoup" id="P36000">
    <property type="interactions" value="995"/>
</dbReference>
<dbReference type="IntAct" id="P36000">
    <property type="interactions" value="46"/>
</dbReference>
<dbReference type="MINT" id="P36000"/>
<dbReference type="STRING" id="4932.YKL135C"/>
<dbReference type="iPTMnet" id="P36000"/>
<dbReference type="PaxDb" id="4932-YKL135C"/>
<dbReference type="PeptideAtlas" id="P36000"/>
<dbReference type="EnsemblFungi" id="YKL135C_mRNA">
    <property type="protein sequence ID" value="YKL135C"/>
    <property type="gene ID" value="YKL135C"/>
</dbReference>
<dbReference type="GeneID" id="853723"/>
<dbReference type="KEGG" id="sce:YKL135C"/>
<dbReference type="AGR" id="SGD:S000001618"/>
<dbReference type="SGD" id="S000001618">
    <property type="gene designation" value="APL2"/>
</dbReference>
<dbReference type="VEuPathDB" id="FungiDB:YKL135C"/>
<dbReference type="eggNOG" id="KOG1061">
    <property type="taxonomic scope" value="Eukaryota"/>
</dbReference>
<dbReference type="GeneTree" id="ENSGT00960000189261"/>
<dbReference type="HOGENOM" id="CLU_006320_4_0_1"/>
<dbReference type="InParanoid" id="P36000"/>
<dbReference type="OMA" id="NPPEVQW"/>
<dbReference type="OrthoDB" id="10254310at2759"/>
<dbReference type="BioCyc" id="YEAST:G3O-31913-MONOMER"/>
<dbReference type="Reactome" id="R-SCE-432720">
    <property type="pathway name" value="Lysosome Vesicle Biogenesis"/>
</dbReference>
<dbReference type="Reactome" id="R-SCE-437239">
    <property type="pathway name" value="Recycling pathway of L1"/>
</dbReference>
<dbReference type="Reactome" id="R-SCE-8856825">
    <property type="pathway name" value="Cargo recognition for clathrin-mediated endocytosis"/>
</dbReference>
<dbReference type="Reactome" id="R-SCE-8856828">
    <property type="pathway name" value="Clathrin-mediated endocytosis"/>
</dbReference>
<dbReference type="Reactome" id="R-SCE-8866427">
    <property type="pathway name" value="VLDLR internalisation and degradation"/>
</dbReference>
<dbReference type="Reactome" id="R-SCE-8964038">
    <property type="pathway name" value="LDL clearance"/>
</dbReference>
<dbReference type="BioGRID-ORCS" id="853723">
    <property type="hits" value="0 hits in 10 CRISPR screens"/>
</dbReference>
<dbReference type="PRO" id="PR:P36000"/>
<dbReference type="Proteomes" id="UP000002311">
    <property type="component" value="Chromosome XI"/>
</dbReference>
<dbReference type="RNAct" id="P36000">
    <property type="molecule type" value="protein"/>
</dbReference>
<dbReference type="GO" id="GO:0030121">
    <property type="term" value="C:AP-1 adaptor complex"/>
    <property type="evidence" value="ECO:0000314"/>
    <property type="project" value="SGD"/>
</dbReference>
<dbReference type="GO" id="GO:0005905">
    <property type="term" value="C:clathrin-coated pit"/>
    <property type="evidence" value="ECO:0007669"/>
    <property type="project" value="UniProtKB-KW"/>
</dbReference>
<dbReference type="GO" id="GO:0005829">
    <property type="term" value="C:cytosol"/>
    <property type="evidence" value="ECO:0007005"/>
    <property type="project" value="SGD"/>
</dbReference>
<dbReference type="GO" id="GO:0005886">
    <property type="term" value="C:plasma membrane"/>
    <property type="evidence" value="ECO:0007669"/>
    <property type="project" value="UniProtKB-SubCell"/>
</dbReference>
<dbReference type="GO" id="GO:0030276">
    <property type="term" value="F:clathrin binding"/>
    <property type="evidence" value="ECO:0000314"/>
    <property type="project" value="SGD"/>
</dbReference>
<dbReference type="GO" id="GO:0006896">
    <property type="term" value="P:Golgi to vacuole transport"/>
    <property type="evidence" value="ECO:0000315"/>
    <property type="project" value="SGD"/>
</dbReference>
<dbReference type="GO" id="GO:0006886">
    <property type="term" value="P:intracellular protein transport"/>
    <property type="evidence" value="ECO:0007669"/>
    <property type="project" value="InterPro"/>
</dbReference>
<dbReference type="GO" id="GO:0048203">
    <property type="term" value="P:vesicle targeting, trans-Golgi to endosome"/>
    <property type="evidence" value="ECO:0000315"/>
    <property type="project" value="ComplexPortal"/>
</dbReference>
<dbReference type="Gene3D" id="1.25.10.10">
    <property type="entry name" value="Leucine-rich Repeat Variant"/>
    <property type="match status" value="1"/>
</dbReference>
<dbReference type="InterPro" id="IPR026739">
    <property type="entry name" value="AP_beta"/>
</dbReference>
<dbReference type="InterPro" id="IPR016342">
    <property type="entry name" value="AP_complex_bsu_1_2_4"/>
</dbReference>
<dbReference type="InterPro" id="IPR011989">
    <property type="entry name" value="ARM-like"/>
</dbReference>
<dbReference type="InterPro" id="IPR016024">
    <property type="entry name" value="ARM-type_fold"/>
</dbReference>
<dbReference type="InterPro" id="IPR002553">
    <property type="entry name" value="Clathrin/coatomer_adapt-like_N"/>
</dbReference>
<dbReference type="PANTHER" id="PTHR11134">
    <property type="entry name" value="ADAPTOR COMPLEX SUBUNIT BETA FAMILY MEMBER"/>
    <property type="match status" value="1"/>
</dbReference>
<dbReference type="Pfam" id="PF01602">
    <property type="entry name" value="Adaptin_N"/>
    <property type="match status" value="1"/>
</dbReference>
<dbReference type="PIRSF" id="PIRSF002291">
    <property type="entry name" value="AP_complex_beta"/>
    <property type="match status" value="1"/>
</dbReference>
<dbReference type="SUPFAM" id="SSF48371">
    <property type="entry name" value="ARM repeat"/>
    <property type="match status" value="1"/>
</dbReference>
<comment type="function">
    <text evidence="1">Adaptins are components of the adaptor complexes which link clathrin to receptors in coated vesicles. Clathrin-associated protein complexes are believed to interact with the cytoplasmic tails of membrane proteins, leading to their selection and concentration. The AP-1 complex interacts directly with clathrin.</text>
</comment>
<comment type="subunit">
    <text evidence="1">Adaptor protein complex 1 (AP-1) is a heterotetramer composed of two large adaptins (gamma-type subunit APL4 and beta-type subunit APL2), a medium adaptin (mu-type subunit APM1) and a small adaptin (sigma-type subunit APS1). Interacts with CHC1. Interacts with APM2, probably forming an alternative AP-1-like complex.</text>
</comment>
<comment type="interaction">
    <interactant intactId="EBI-2206">
        <id>P36000</id>
    </interactant>
    <interactant intactId="EBI-33025">
        <id>Q12028</id>
        <label>APL4</label>
    </interactant>
    <organismsDiffer>false</organismsDiffer>
    <experiments>6</experiments>
</comment>
<comment type="interaction">
    <interactant intactId="EBI-2206">
        <id>P36000</id>
    </interactant>
    <interactant intactId="EBI-2624">
        <id>Q00776</id>
        <label>APM1</label>
    </interactant>
    <organismsDiffer>false</organismsDiffer>
    <experiments>10</experiments>
</comment>
<comment type="interaction">
    <interactant intactId="EBI-2206">
        <id>P36000</id>
    </interactant>
    <interactant intactId="EBI-2705">
        <id>P38700</id>
        <label>APM2</label>
    </interactant>
    <organismsDiffer>false</organismsDiffer>
    <experiments>7</experiments>
</comment>
<comment type="interaction">
    <interactant intactId="EBI-2206">
        <id>P36000</id>
    </interactant>
    <interactant intactId="EBI-2612">
        <id>P35181</id>
        <label>APS1</label>
    </interactant>
    <organismsDiffer>false</organismsDiffer>
    <experiments>6</experiments>
</comment>
<comment type="interaction">
    <interactant intactId="EBI-2206">
        <id>P36000</id>
    </interactant>
    <interactant intactId="EBI-4766">
        <id>P22137</id>
        <label>CHC1</label>
    </interactant>
    <organismsDiffer>false</organismsDiffer>
    <experiments>3</experiments>
</comment>
<comment type="subcellular location">
    <subcellularLocation>
        <location>Cell membrane</location>
    </subcellularLocation>
    <subcellularLocation>
        <location>Membrane</location>
        <location>Coated pit</location>
        <topology>Peripheral membrane protein</topology>
        <orientation>Cytoplasmic side</orientation>
    </subcellularLocation>
    <text>Component of the coat surrounding the cytoplasmic face of coated vesicles in the plasma membrane.</text>
</comment>
<comment type="miscellaneous">
    <text evidence="2">Present with 2690 molecules/cell in log phase SD medium.</text>
</comment>
<comment type="similarity">
    <text evidence="3">Belongs to the adaptor complexes large subunit family.</text>
</comment>
<reference key="1">
    <citation type="journal article" date="1995" name="J. Cell Sci.">
        <title>Saccharomyces cerevisiae Apl2p, a homologue of the mammalian clathrin AP beta subunit, plays a role in clathrin-dependent Golgi functions.</title>
        <authorList>
            <person name="Rad M.R."/>
            <person name="Phan H.L."/>
            <person name="Kirchrath L."/>
            <person name="Tan P.K."/>
            <person name="Kirchhausen T."/>
            <person name="Hollenberg C.P."/>
            <person name="Payne G.S."/>
        </authorList>
    </citation>
    <scope>NUCLEOTIDE SEQUENCE [GENOMIC DNA]</scope>
</reference>
<reference key="2">
    <citation type="journal article" date="1994" name="Nature">
        <title>Complete DNA sequence of yeast chromosome XI.</title>
        <authorList>
            <person name="Dujon B."/>
            <person name="Alexandraki D."/>
            <person name="Andre B."/>
            <person name="Ansorge W."/>
            <person name="Baladron V."/>
            <person name="Ballesta J.P.G."/>
            <person name="Banrevi A."/>
            <person name="Bolle P.-A."/>
            <person name="Bolotin-Fukuhara M."/>
            <person name="Bossier P."/>
            <person name="Bou G."/>
            <person name="Boyer J."/>
            <person name="Buitrago M.J."/>
            <person name="Cheret G."/>
            <person name="Colleaux L."/>
            <person name="Daignan-Fornier B."/>
            <person name="del Rey F."/>
            <person name="Dion C."/>
            <person name="Domdey H."/>
            <person name="Duesterhoeft A."/>
            <person name="Duesterhus S."/>
            <person name="Entian K.-D."/>
            <person name="Erfle H."/>
            <person name="Esteban P.F."/>
            <person name="Feldmann H."/>
            <person name="Fernandes L."/>
            <person name="Fobo G.M."/>
            <person name="Fritz C."/>
            <person name="Fukuhara H."/>
            <person name="Gabel C."/>
            <person name="Gaillon L."/>
            <person name="Garcia-Cantalejo J.M."/>
            <person name="Garcia-Ramirez J.J."/>
            <person name="Gent M.E."/>
            <person name="Ghazvini M."/>
            <person name="Goffeau A."/>
            <person name="Gonzalez A."/>
            <person name="Grothues D."/>
            <person name="Guerreiro P."/>
            <person name="Hegemann J.H."/>
            <person name="Hewitt N."/>
            <person name="Hilger F."/>
            <person name="Hollenberg C.P."/>
            <person name="Horaitis O."/>
            <person name="Indge K.J."/>
            <person name="Jacquier A."/>
            <person name="James C.M."/>
            <person name="Jauniaux J.-C."/>
            <person name="Jimenez A."/>
            <person name="Keuchel H."/>
            <person name="Kirchrath L."/>
            <person name="Kleine K."/>
            <person name="Koetter P."/>
            <person name="Legrain P."/>
            <person name="Liebl S."/>
            <person name="Louis E.J."/>
            <person name="Maia e Silva A."/>
            <person name="Marck C."/>
            <person name="Monnier A.-L."/>
            <person name="Moestl D."/>
            <person name="Mueller S."/>
            <person name="Obermaier B."/>
            <person name="Oliver S.G."/>
            <person name="Pallier C."/>
            <person name="Pascolo S."/>
            <person name="Pfeiffer F."/>
            <person name="Philippsen P."/>
            <person name="Planta R.J."/>
            <person name="Pohl F.M."/>
            <person name="Pohl T.M."/>
            <person name="Poehlmann R."/>
            <person name="Portetelle D."/>
            <person name="Purnelle B."/>
            <person name="Puzos V."/>
            <person name="Ramezani Rad M."/>
            <person name="Rasmussen S.W."/>
            <person name="Remacha M.A."/>
            <person name="Revuelta J.L."/>
            <person name="Richard G.-F."/>
            <person name="Rieger M."/>
            <person name="Rodrigues-Pousada C."/>
            <person name="Rose M."/>
            <person name="Rupp T."/>
            <person name="Santos M.A."/>
            <person name="Schwager C."/>
            <person name="Sensen C."/>
            <person name="Skala J."/>
            <person name="Soares H."/>
            <person name="Sor F."/>
            <person name="Stegemann J."/>
            <person name="Tettelin H."/>
            <person name="Thierry A."/>
            <person name="Tzermia M."/>
            <person name="Urrestarazu L.A."/>
            <person name="van Dyck L."/>
            <person name="van Vliet-Reedijk J.C."/>
            <person name="Valens M."/>
            <person name="Vandenbol M."/>
            <person name="Vilela C."/>
            <person name="Vissers S."/>
            <person name="von Wettstein D."/>
            <person name="Voss H."/>
            <person name="Wiemann S."/>
            <person name="Xu G."/>
            <person name="Zimmermann J."/>
            <person name="Haasemann M."/>
            <person name="Becker I."/>
            <person name="Mewes H.-W."/>
        </authorList>
    </citation>
    <scope>NUCLEOTIDE SEQUENCE [LARGE SCALE GENOMIC DNA]</scope>
    <source>
        <strain>ATCC 204508 / S288c</strain>
    </source>
</reference>
<reference key="3">
    <citation type="journal article" date="2014" name="G3 (Bethesda)">
        <title>The reference genome sequence of Saccharomyces cerevisiae: Then and now.</title>
        <authorList>
            <person name="Engel S.R."/>
            <person name="Dietrich F.S."/>
            <person name="Fisk D.G."/>
            <person name="Binkley G."/>
            <person name="Balakrishnan R."/>
            <person name="Costanzo M.C."/>
            <person name="Dwight S.S."/>
            <person name="Hitz B.C."/>
            <person name="Karra K."/>
            <person name="Nash R.S."/>
            <person name="Weng S."/>
            <person name="Wong E.D."/>
            <person name="Lloyd P."/>
            <person name="Skrzypek M.S."/>
            <person name="Miyasato S.R."/>
            <person name="Simison M."/>
            <person name="Cherry J.M."/>
        </authorList>
    </citation>
    <scope>GENOME REANNOTATION</scope>
    <source>
        <strain>ATCC 204508 / S288c</strain>
    </source>
</reference>
<reference key="4">
    <citation type="journal article" date="1999" name="Mol. Biol. Cell">
        <title>Adaptor complex-independent clathrin function in yeast.</title>
        <authorList>
            <person name="Yeung B.G."/>
            <person name="Phan H.L."/>
            <person name="Payne G.S."/>
        </authorList>
    </citation>
    <scope>FUNCTION</scope>
    <scope>SUBUNIT</scope>
    <scope>INTERACTION WITH APM2 AND CHC1</scope>
</reference>
<reference key="5">
    <citation type="journal article" date="2003" name="Nature">
        <title>Global analysis of protein expression in yeast.</title>
        <authorList>
            <person name="Ghaemmaghami S."/>
            <person name="Huh W.-K."/>
            <person name="Bower K."/>
            <person name="Howson R.W."/>
            <person name="Belle A."/>
            <person name="Dephoure N."/>
            <person name="O'Shea E.K."/>
            <person name="Weissman J.S."/>
        </authorList>
    </citation>
    <scope>LEVEL OF PROTEIN EXPRESSION [LARGE SCALE ANALYSIS]</scope>
</reference>
<reference key="6">
    <citation type="journal article" date="2008" name="Mol. Cell. Proteomics">
        <title>A multidimensional chromatography technology for in-depth phosphoproteome analysis.</title>
        <authorList>
            <person name="Albuquerque C.P."/>
            <person name="Smolka M.B."/>
            <person name="Payne S.H."/>
            <person name="Bafna V."/>
            <person name="Eng J."/>
            <person name="Zhou H."/>
        </authorList>
    </citation>
    <scope>IDENTIFICATION BY MASS SPECTROMETRY [LARGE SCALE ANALYSIS]</scope>
</reference>
<organism>
    <name type="scientific">Saccharomyces cerevisiae (strain ATCC 204508 / S288c)</name>
    <name type="common">Baker's yeast</name>
    <dbReference type="NCBI Taxonomy" id="559292"/>
    <lineage>
        <taxon>Eukaryota</taxon>
        <taxon>Fungi</taxon>
        <taxon>Dikarya</taxon>
        <taxon>Ascomycota</taxon>
        <taxon>Saccharomycotina</taxon>
        <taxon>Saccharomycetes</taxon>
        <taxon>Saccharomycetales</taxon>
        <taxon>Saccharomycetaceae</taxon>
        <taxon>Saccharomyces</taxon>
    </lineage>
</organism>
<name>AP1B1_YEAST</name>